<comment type="function">
    <text evidence="1">Involved in transcription antitermination. Required for transcription of ribosomal RNA (rRNA) genes. Binds specifically to the boxA antiterminator sequence of the ribosomal RNA (rrn) operons.</text>
</comment>
<comment type="similarity">
    <text evidence="1">Belongs to the NusB family.</text>
</comment>
<proteinExistence type="inferred from homology"/>
<dbReference type="EMBL" id="CP001068">
    <property type="protein sequence ID" value="ACD25811.1"/>
    <property type="molecule type" value="Genomic_DNA"/>
</dbReference>
<dbReference type="SMR" id="B2U7E9"/>
<dbReference type="STRING" id="402626.Rpic_0660"/>
<dbReference type="KEGG" id="rpi:Rpic_0660"/>
<dbReference type="eggNOG" id="COG0781">
    <property type="taxonomic scope" value="Bacteria"/>
</dbReference>
<dbReference type="HOGENOM" id="CLU_087843_4_1_4"/>
<dbReference type="GO" id="GO:0005829">
    <property type="term" value="C:cytosol"/>
    <property type="evidence" value="ECO:0007669"/>
    <property type="project" value="TreeGrafter"/>
</dbReference>
<dbReference type="GO" id="GO:0003723">
    <property type="term" value="F:RNA binding"/>
    <property type="evidence" value="ECO:0007669"/>
    <property type="project" value="UniProtKB-UniRule"/>
</dbReference>
<dbReference type="GO" id="GO:0006353">
    <property type="term" value="P:DNA-templated transcription termination"/>
    <property type="evidence" value="ECO:0007669"/>
    <property type="project" value="UniProtKB-UniRule"/>
</dbReference>
<dbReference type="GO" id="GO:0031564">
    <property type="term" value="P:transcription antitermination"/>
    <property type="evidence" value="ECO:0007669"/>
    <property type="project" value="UniProtKB-KW"/>
</dbReference>
<dbReference type="Gene3D" id="1.10.940.10">
    <property type="entry name" value="NusB-like"/>
    <property type="match status" value="1"/>
</dbReference>
<dbReference type="HAMAP" id="MF_00073">
    <property type="entry name" value="NusB"/>
    <property type="match status" value="1"/>
</dbReference>
<dbReference type="InterPro" id="IPR035926">
    <property type="entry name" value="NusB-like_sf"/>
</dbReference>
<dbReference type="InterPro" id="IPR011605">
    <property type="entry name" value="NusB_fam"/>
</dbReference>
<dbReference type="InterPro" id="IPR006027">
    <property type="entry name" value="NusB_RsmB_TIM44"/>
</dbReference>
<dbReference type="NCBIfam" id="TIGR01951">
    <property type="entry name" value="nusB"/>
    <property type="match status" value="1"/>
</dbReference>
<dbReference type="PANTHER" id="PTHR11078:SF3">
    <property type="entry name" value="ANTITERMINATION NUSB DOMAIN-CONTAINING PROTEIN"/>
    <property type="match status" value="1"/>
</dbReference>
<dbReference type="PANTHER" id="PTHR11078">
    <property type="entry name" value="N UTILIZATION SUBSTANCE PROTEIN B-RELATED"/>
    <property type="match status" value="1"/>
</dbReference>
<dbReference type="Pfam" id="PF01029">
    <property type="entry name" value="NusB"/>
    <property type="match status" value="1"/>
</dbReference>
<dbReference type="SUPFAM" id="SSF48013">
    <property type="entry name" value="NusB-like"/>
    <property type="match status" value="1"/>
</dbReference>
<reference key="1">
    <citation type="submission" date="2008-05" db="EMBL/GenBank/DDBJ databases">
        <title>Complete sequence of chromosome 1 of Ralstonia pickettii 12J.</title>
        <authorList>
            <person name="Lucas S."/>
            <person name="Copeland A."/>
            <person name="Lapidus A."/>
            <person name="Glavina del Rio T."/>
            <person name="Dalin E."/>
            <person name="Tice H."/>
            <person name="Bruce D."/>
            <person name="Goodwin L."/>
            <person name="Pitluck S."/>
            <person name="Meincke L."/>
            <person name="Brettin T."/>
            <person name="Detter J.C."/>
            <person name="Han C."/>
            <person name="Kuske C.R."/>
            <person name="Schmutz J."/>
            <person name="Larimer F."/>
            <person name="Land M."/>
            <person name="Hauser L."/>
            <person name="Kyrpides N."/>
            <person name="Mikhailova N."/>
            <person name="Marsh T."/>
            <person name="Richardson P."/>
        </authorList>
    </citation>
    <scope>NUCLEOTIDE SEQUENCE [LARGE SCALE GENOMIC DNA]</scope>
    <source>
        <strain>12J</strain>
    </source>
</reference>
<feature type="chain" id="PRO_1000092575" description="Transcription antitermination protein NusB">
    <location>
        <begin position="1"/>
        <end position="155"/>
    </location>
</feature>
<sequence length="155" mass="17157">MTQDNSQAKAKAPAKSARRRARELALQGLYQWLLNRNDPGVVEAHLQDAQGFNKADRAHFDALLHGAIREETTLTEAFTPYLDRPVAELSPVERAALLVGAYELVHCVDIPYKVVINEAVELTKTFGGVEGYKYVNGVLDKLATQVRAVEVAARR</sequence>
<gene>
    <name evidence="1" type="primary">nusB</name>
    <name type="ordered locus">Rpic_0660</name>
</gene>
<name>NUSB_RALPJ</name>
<protein>
    <recommendedName>
        <fullName evidence="1">Transcription antitermination protein NusB</fullName>
    </recommendedName>
    <alternativeName>
        <fullName evidence="1">Antitermination factor NusB</fullName>
    </alternativeName>
</protein>
<evidence type="ECO:0000255" key="1">
    <source>
        <dbReference type="HAMAP-Rule" id="MF_00073"/>
    </source>
</evidence>
<organism>
    <name type="scientific">Ralstonia pickettii (strain 12J)</name>
    <dbReference type="NCBI Taxonomy" id="402626"/>
    <lineage>
        <taxon>Bacteria</taxon>
        <taxon>Pseudomonadati</taxon>
        <taxon>Pseudomonadota</taxon>
        <taxon>Betaproteobacteria</taxon>
        <taxon>Burkholderiales</taxon>
        <taxon>Burkholderiaceae</taxon>
        <taxon>Ralstonia</taxon>
    </lineage>
</organism>
<keyword id="KW-0694">RNA-binding</keyword>
<keyword id="KW-0804">Transcription</keyword>
<keyword id="KW-0889">Transcription antitermination</keyword>
<keyword id="KW-0805">Transcription regulation</keyword>
<accession>B2U7E9</accession>